<gene>
    <name evidence="1" type="primary">rps27e</name>
    <name type="ordered locus">Hbut_1641</name>
</gene>
<name>RS27_HYPBU</name>
<comment type="cofactor">
    <cofactor evidence="1">
        <name>Zn(2+)</name>
        <dbReference type="ChEBI" id="CHEBI:29105"/>
    </cofactor>
    <text evidence="1">Binds 1 zinc ion per subunit.</text>
</comment>
<comment type="subunit">
    <text evidence="1">Part of the 30S ribosomal subunit.</text>
</comment>
<comment type="similarity">
    <text evidence="1">Belongs to the eukaryotic ribosomal protein eS27 family.</text>
</comment>
<evidence type="ECO:0000255" key="1">
    <source>
        <dbReference type="HAMAP-Rule" id="MF_00371"/>
    </source>
</evidence>
<evidence type="ECO:0000305" key="2"/>
<reference key="1">
    <citation type="journal article" date="2007" name="Archaea">
        <title>The genome of Hyperthermus butylicus: a sulfur-reducing, peptide fermenting, neutrophilic Crenarchaeote growing up to 108 degrees C.</title>
        <authorList>
            <person name="Bruegger K."/>
            <person name="Chen L."/>
            <person name="Stark M."/>
            <person name="Zibat A."/>
            <person name="Redder P."/>
            <person name="Ruepp A."/>
            <person name="Awayez M."/>
            <person name="She Q."/>
            <person name="Garrett R.A."/>
            <person name="Klenk H.-P."/>
        </authorList>
    </citation>
    <scope>NUCLEOTIDE SEQUENCE [LARGE SCALE GENOMIC DNA]</scope>
    <source>
        <strain>DSM 5456 / JCM 9403 / PLM1-5</strain>
    </source>
</reference>
<protein>
    <recommendedName>
        <fullName evidence="1">Small ribosomal subunit protein eS27</fullName>
    </recommendedName>
    <alternativeName>
        <fullName evidence="2">30S ribosomal protein S27e</fullName>
    </alternativeName>
</protein>
<sequence>MVSKFKILVPQPRSRFLLVRCPVCGNEQVIFSHATFPARCLVCGAQLVEPTGGKAKILGQVVRVLG</sequence>
<keyword id="KW-0479">Metal-binding</keyword>
<keyword id="KW-1185">Reference proteome</keyword>
<keyword id="KW-0687">Ribonucleoprotein</keyword>
<keyword id="KW-0689">Ribosomal protein</keyword>
<keyword id="KW-0862">Zinc</keyword>
<keyword id="KW-0863">Zinc-finger</keyword>
<dbReference type="EMBL" id="CP000493">
    <property type="protein sequence ID" value="ABM81455.1"/>
    <property type="molecule type" value="Genomic_DNA"/>
</dbReference>
<dbReference type="RefSeq" id="WP_011822773.1">
    <property type="nucleotide sequence ID" value="NC_008818.1"/>
</dbReference>
<dbReference type="SMR" id="A2BN94"/>
<dbReference type="STRING" id="415426.Hbut_1641"/>
<dbReference type="EnsemblBacteria" id="ABM81455">
    <property type="protein sequence ID" value="ABM81455"/>
    <property type="gene ID" value="Hbut_1641"/>
</dbReference>
<dbReference type="GeneID" id="4781870"/>
<dbReference type="KEGG" id="hbu:Hbut_1641"/>
<dbReference type="eggNOG" id="arCOG04108">
    <property type="taxonomic scope" value="Archaea"/>
</dbReference>
<dbReference type="HOGENOM" id="CLU_199465_0_0_2"/>
<dbReference type="OrthoDB" id="5718at2157"/>
<dbReference type="Proteomes" id="UP000002593">
    <property type="component" value="Chromosome"/>
</dbReference>
<dbReference type="GO" id="GO:1990904">
    <property type="term" value="C:ribonucleoprotein complex"/>
    <property type="evidence" value="ECO:0007669"/>
    <property type="project" value="UniProtKB-KW"/>
</dbReference>
<dbReference type="GO" id="GO:0005840">
    <property type="term" value="C:ribosome"/>
    <property type="evidence" value="ECO:0007669"/>
    <property type="project" value="UniProtKB-KW"/>
</dbReference>
<dbReference type="GO" id="GO:0003735">
    <property type="term" value="F:structural constituent of ribosome"/>
    <property type="evidence" value="ECO:0007669"/>
    <property type="project" value="InterPro"/>
</dbReference>
<dbReference type="GO" id="GO:0008270">
    <property type="term" value="F:zinc ion binding"/>
    <property type="evidence" value="ECO:0007669"/>
    <property type="project" value="UniProtKB-UniRule"/>
</dbReference>
<dbReference type="GO" id="GO:0006412">
    <property type="term" value="P:translation"/>
    <property type="evidence" value="ECO:0007669"/>
    <property type="project" value="UniProtKB-UniRule"/>
</dbReference>
<dbReference type="Gene3D" id="2.20.25.100">
    <property type="entry name" value="Zn-binding ribosomal proteins"/>
    <property type="match status" value="1"/>
</dbReference>
<dbReference type="HAMAP" id="MF_00371">
    <property type="entry name" value="Ribosomal_eS27"/>
    <property type="match status" value="1"/>
</dbReference>
<dbReference type="InterPro" id="IPR000592">
    <property type="entry name" value="Ribosomal_eS27"/>
</dbReference>
<dbReference type="InterPro" id="IPR023407">
    <property type="entry name" value="Ribosomal_eS27_Zn-bd_dom_sf"/>
</dbReference>
<dbReference type="InterPro" id="IPR011332">
    <property type="entry name" value="Ribosomal_zn-bd"/>
</dbReference>
<dbReference type="NCBIfam" id="NF001629">
    <property type="entry name" value="PRK00415.1"/>
    <property type="match status" value="1"/>
</dbReference>
<dbReference type="Pfam" id="PF01667">
    <property type="entry name" value="Ribosomal_S27e"/>
    <property type="match status" value="1"/>
</dbReference>
<dbReference type="SUPFAM" id="SSF57829">
    <property type="entry name" value="Zn-binding ribosomal proteins"/>
    <property type="match status" value="1"/>
</dbReference>
<dbReference type="PROSITE" id="PS01168">
    <property type="entry name" value="RIBOSOMAL_S27E"/>
    <property type="match status" value="1"/>
</dbReference>
<feature type="chain" id="PRO_1000007133" description="Small ribosomal subunit protein eS27">
    <location>
        <begin position="1"/>
        <end position="66"/>
    </location>
</feature>
<feature type="zinc finger region" description="C4-type" evidence="1">
    <location>
        <begin position="21"/>
        <end position="43"/>
    </location>
</feature>
<feature type="binding site" evidence="1">
    <location>
        <position position="21"/>
    </location>
    <ligand>
        <name>Zn(2+)</name>
        <dbReference type="ChEBI" id="CHEBI:29105"/>
    </ligand>
</feature>
<feature type="binding site" evidence="1">
    <location>
        <position position="24"/>
    </location>
    <ligand>
        <name>Zn(2+)</name>
        <dbReference type="ChEBI" id="CHEBI:29105"/>
    </ligand>
</feature>
<feature type="binding site" evidence="1">
    <location>
        <position position="40"/>
    </location>
    <ligand>
        <name>Zn(2+)</name>
        <dbReference type="ChEBI" id="CHEBI:29105"/>
    </ligand>
</feature>
<feature type="binding site" evidence="1">
    <location>
        <position position="43"/>
    </location>
    <ligand>
        <name>Zn(2+)</name>
        <dbReference type="ChEBI" id="CHEBI:29105"/>
    </ligand>
</feature>
<accession>A2BN94</accession>
<organism>
    <name type="scientific">Hyperthermus butylicus (strain DSM 5456 / JCM 9403 / PLM1-5)</name>
    <dbReference type="NCBI Taxonomy" id="415426"/>
    <lineage>
        <taxon>Archaea</taxon>
        <taxon>Thermoproteota</taxon>
        <taxon>Thermoprotei</taxon>
        <taxon>Desulfurococcales</taxon>
        <taxon>Pyrodictiaceae</taxon>
        <taxon>Hyperthermus</taxon>
    </lineage>
</organism>
<proteinExistence type="inferred from homology"/>